<organism>
    <name type="scientific">Bacillus cytotoxicus (strain DSM 22905 / CIP 110041 / 391-98 / NVH 391-98)</name>
    <dbReference type="NCBI Taxonomy" id="315749"/>
    <lineage>
        <taxon>Bacteria</taxon>
        <taxon>Bacillati</taxon>
        <taxon>Bacillota</taxon>
        <taxon>Bacilli</taxon>
        <taxon>Bacillales</taxon>
        <taxon>Bacillaceae</taxon>
        <taxon>Bacillus</taxon>
        <taxon>Bacillus cereus group</taxon>
    </lineage>
</organism>
<gene>
    <name type="ordered locus">Bcer98_0465</name>
</gene>
<dbReference type="EMBL" id="CP000764">
    <property type="protein sequence ID" value="ABS20820.1"/>
    <property type="molecule type" value="Genomic_DNA"/>
</dbReference>
<dbReference type="RefSeq" id="WP_011983576.1">
    <property type="nucleotide sequence ID" value="NC_009674.1"/>
</dbReference>
<dbReference type="SMR" id="A7GL12"/>
<dbReference type="STRING" id="315749.Bcer98_0465"/>
<dbReference type="GeneID" id="33895827"/>
<dbReference type="KEGG" id="bcy:Bcer98_0465"/>
<dbReference type="eggNOG" id="COG0217">
    <property type="taxonomic scope" value="Bacteria"/>
</dbReference>
<dbReference type="HOGENOM" id="CLU_062974_2_0_9"/>
<dbReference type="OrthoDB" id="9781053at2"/>
<dbReference type="Proteomes" id="UP000002300">
    <property type="component" value="Chromosome"/>
</dbReference>
<dbReference type="GO" id="GO:0005829">
    <property type="term" value="C:cytosol"/>
    <property type="evidence" value="ECO:0007669"/>
    <property type="project" value="TreeGrafter"/>
</dbReference>
<dbReference type="GO" id="GO:0003677">
    <property type="term" value="F:DNA binding"/>
    <property type="evidence" value="ECO:0007669"/>
    <property type="project" value="UniProtKB-UniRule"/>
</dbReference>
<dbReference type="GO" id="GO:0006355">
    <property type="term" value="P:regulation of DNA-templated transcription"/>
    <property type="evidence" value="ECO:0007669"/>
    <property type="project" value="UniProtKB-UniRule"/>
</dbReference>
<dbReference type="FunFam" id="1.10.10.200:FF:000003">
    <property type="entry name" value="Probable transcriptional regulatory protein YeeN"/>
    <property type="match status" value="1"/>
</dbReference>
<dbReference type="FunFam" id="3.30.70.980:FF:000004">
    <property type="entry name" value="Probable transcriptional regulatory protein YeeN"/>
    <property type="match status" value="1"/>
</dbReference>
<dbReference type="Gene3D" id="1.10.10.200">
    <property type="match status" value="1"/>
</dbReference>
<dbReference type="Gene3D" id="3.30.70.980">
    <property type="match status" value="2"/>
</dbReference>
<dbReference type="HAMAP" id="MF_00693">
    <property type="entry name" value="Transcrip_reg_TACO1"/>
    <property type="match status" value="1"/>
</dbReference>
<dbReference type="HAMAP" id="MF_00918">
    <property type="entry name" value="Transcrip_reg_TACO1_YeeN"/>
    <property type="match status" value="1"/>
</dbReference>
<dbReference type="InterPro" id="IPR017856">
    <property type="entry name" value="Integrase-like_N"/>
</dbReference>
<dbReference type="InterPro" id="IPR048300">
    <property type="entry name" value="TACO1_YebC-like_2nd/3rd_dom"/>
</dbReference>
<dbReference type="InterPro" id="IPR049083">
    <property type="entry name" value="TACO1_YebC_N"/>
</dbReference>
<dbReference type="InterPro" id="IPR002876">
    <property type="entry name" value="Transcrip_reg_TACO1-like"/>
</dbReference>
<dbReference type="InterPro" id="IPR026564">
    <property type="entry name" value="Transcrip_reg_TACO1-like_dom3"/>
</dbReference>
<dbReference type="InterPro" id="IPR026562">
    <property type="entry name" value="Transcrip_reg_TACO1_YeeN"/>
</dbReference>
<dbReference type="InterPro" id="IPR029072">
    <property type="entry name" value="YebC-like"/>
</dbReference>
<dbReference type="NCBIfam" id="NF001030">
    <property type="entry name" value="PRK00110.1"/>
    <property type="match status" value="1"/>
</dbReference>
<dbReference type="NCBIfam" id="NF009044">
    <property type="entry name" value="PRK12378.1"/>
    <property type="match status" value="1"/>
</dbReference>
<dbReference type="NCBIfam" id="TIGR01033">
    <property type="entry name" value="YebC/PmpR family DNA-binding transcriptional regulator"/>
    <property type="match status" value="1"/>
</dbReference>
<dbReference type="PANTHER" id="PTHR12532">
    <property type="entry name" value="TRANSLATIONAL ACTIVATOR OF CYTOCHROME C OXIDASE 1"/>
    <property type="match status" value="1"/>
</dbReference>
<dbReference type="PANTHER" id="PTHR12532:SF0">
    <property type="entry name" value="TRANSLATIONAL ACTIVATOR OF CYTOCHROME C OXIDASE 1"/>
    <property type="match status" value="1"/>
</dbReference>
<dbReference type="Pfam" id="PF20772">
    <property type="entry name" value="TACO1_YebC_N"/>
    <property type="match status" value="1"/>
</dbReference>
<dbReference type="Pfam" id="PF01709">
    <property type="entry name" value="Transcrip_reg"/>
    <property type="match status" value="1"/>
</dbReference>
<dbReference type="SUPFAM" id="SSF75625">
    <property type="entry name" value="YebC-like"/>
    <property type="match status" value="1"/>
</dbReference>
<reference key="1">
    <citation type="journal article" date="2008" name="Chem. Biol. Interact.">
        <title>Extending the Bacillus cereus group genomics to putative food-borne pathogens of different toxicity.</title>
        <authorList>
            <person name="Lapidus A."/>
            <person name="Goltsman E."/>
            <person name="Auger S."/>
            <person name="Galleron N."/>
            <person name="Segurens B."/>
            <person name="Dossat C."/>
            <person name="Land M.L."/>
            <person name="Broussolle V."/>
            <person name="Brillard J."/>
            <person name="Guinebretiere M.-H."/>
            <person name="Sanchis V."/>
            <person name="Nguen-the C."/>
            <person name="Lereclus D."/>
            <person name="Richardson P."/>
            <person name="Wincker P."/>
            <person name="Weissenbach J."/>
            <person name="Ehrlich S.D."/>
            <person name="Sorokin A."/>
        </authorList>
    </citation>
    <scope>NUCLEOTIDE SEQUENCE [LARGE SCALE GENOMIC DNA]</scope>
    <source>
        <strain>DSM 22905 / CIP 110041 / 391-98 / NVH 391-98</strain>
    </source>
</reference>
<proteinExistence type="inferred from homology"/>
<sequence length="239" mass="26302">MGRKWNNIKDKKASKDANTSRIYAKFGREIYVAAKQGEPDPESNQALKVVLERAKTYSVPKSIIDRAIEKAKGGSEENYDELRYEGFGPNGSMIIVDTLTNNVNRTAADVRAAFNKNGGNMGVNGSVAYMFDATAVIGLEGKTADEVLEILMEADVDARDILEEEDSVIIYAEPDQFHAVQEALKAAGTTEFTVAELTMLAQNDVELSEEAQAQFEKLIDALEDLDDVQQVYHNVDLGE</sequence>
<name>Y465_BACCN</name>
<comment type="subcellular location">
    <subcellularLocation>
        <location evidence="1">Cytoplasm</location>
    </subcellularLocation>
</comment>
<comment type="similarity">
    <text evidence="1">Belongs to the TACO1 family. YeeN subfamily.</text>
</comment>
<accession>A7GL12</accession>
<feature type="chain" id="PRO_1000083142" description="Probable transcriptional regulatory protein Bcer98_0465">
    <location>
        <begin position="1"/>
        <end position="239"/>
    </location>
</feature>
<keyword id="KW-0963">Cytoplasm</keyword>
<keyword id="KW-0238">DNA-binding</keyword>
<keyword id="KW-0804">Transcription</keyword>
<keyword id="KW-0805">Transcription regulation</keyword>
<protein>
    <recommendedName>
        <fullName evidence="1">Probable transcriptional regulatory protein Bcer98_0465</fullName>
    </recommendedName>
</protein>
<evidence type="ECO:0000255" key="1">
    <source>
        <dbReference type="HAMAP-Rule" id="MF_00918"/>
    </source>
</evidence>